<accession>Q473U1</accession>
<evidence type="ECO:0000255" key="1">
    <source>
        <dbReference type="HAMAP-Rule" id="MF_01357"/>
    </source>
</evidence>
<protein>
    <recommendedName>
        <fullName evidence="1">NADH-quinone oxidoreductase subunit C</fullName>
        <ecNumber evidence="1">7.1.1.-</ecNumber>
    </recommendedName>
    <alternativeName>
        <fullName evidence="1">NADH dehydrogenase I subunit C</fullName>
    </alternativeName>
    <alternativeName>
        <fullName evidence="1">NDH-1 subunit C</fullName>
    </alternativeName>
</protein>
<sequence>MAKLETLKAALEKVLGKRVQKLIEATGELTLIVKADDYLEVARTLRDDPSLRFEQLIDLCGVDYSDFGDGAWDGLRFAAVSHLLSVTHNWRLRLRVFAPDDDFPVVPSLIDVWNSVNWFEREAFDFYGIVFEGHPDLRRLLTDYGFVGHPFRKDFPVSGYVEMRYDPEQKRVIYQPVTIEPREITPRVIREENYGGTQH</sequence>
<dbReference type="EC" id="7.1.1.-" evidence="1"/>
<dbReference type="EMBL" id="CP000090">
    <property type="protein sequence ID" value="AAZ60342.1"/>
    <property type="molecule type" value="Genomic_DNA"/>
</dbReference>
<dbReference type="SMR" id="Q473U1"/>
<dbReference type="STRING" id="264198.Reut_A0963"/>
<dbReference type="KEGG" id="reu:Reut_A0963"/>
<dbReference type="eggNOG" id="COG0852">
    <property type="taxonomic scope" value="Bacteria"/>
</dbReference>
<dbReference type="HOGENOM" id="CLU_042628_2_1_4"/>
<dbReference type="OrthoDB" id="9803286at2"/>
<dbReference type="GO" id="GO:0005886">
    <property type="term" value="C:plasma membrane"/>
    <property type="evidence" value="ECO:0007669"/>
    <property type="project" value="UniProtKB-SubCell"/>
</dbReference>
<dbReference type="GO" id="GO:0008137">
    <property type="term" value="F:NADH dehydrogenase (ubiquinone) activity"/>
    <property type="evidence" value="ECO:0007669"/>
    <property type="project" value="InterPro"/>
</dbReference>
<dbReference type="GO" id="GO:0050136">
    <property type="term" value="F:NADH:ubiquinone reductase (non-electrogenic) activity"/>
    <property type="evidence" value="ECO:0007669"/>
    <property type="project" value="UniProtKB-UniRule"/>
</dbReference>
<dbReference type="GO" id="GO:0048038">
    <property type="term" value="F:quinone binding"/>
    <property type="evidence" value="ECO:0007669"/>
    <property type="project" value="UniProtKB-KW"/>
</dbReference>
<dbReference type="Gene3D" id="3.30.460.80">
    <property type="entry name" value="NADH:ubiquinone oxidoreductase, 30kDa subunit"/>
    <property type="match status" value="1"/>
</dbReference>
<dbReference type="HAMAP" id="MF_01357">
    <property type="entry name" value="NDH1_NuoC"/>
    <property type="match status" value="1"/>
</dbReference>
<dbReference type="InterPro" id="IPR010218">
    <property type="entry name" value="NADH_DH_suC"/>
</dbReference>
<dbReference type="InterPro" id="IPR037232">
    <property type="entry name" value="NADH_quin_OxRdtase_su_C/D-like"/>
</dbReference>
<dbReference type="InterPro" id="IPR001268">
    <property type="entry name" value="NADH_UbQ_OxRdtase_30kDa_su"/>
</dbReference>
<dbReference type="InterPro" id="IPR020396">
    <property type="entry name" value="NADH_UbQ_OxRdtase_CS"/>
</dbReference>
<dbReference type="NCBIfam" id="TIGR01961">
    <property type="entry name" value="NuoC_fam"/>
    <property type="match status" value="1"/>
</dbReference>
<dbReference type="NCBIfam" id="NF004730">
    <property type="entry name" value="PRK06074.1-1"/>
    <property type="match status" value="1"/>
</dbReference>
<dbReference type="PANTHER" id="PTHR10884:SF14">
    <property type="entry name" value="NADH DEHYDROGENASE [UBIQUINONE] IRON-SULFUR PROTEIN 3, MITOCHONDRIAL"/>
    <property type="match status" value="1"/>
</dbReference>
<dbReference type="PANTHER" id="PTHR10884">
    <property type="entry name" value="NADH DEHYDROGENASE UBIQUINONE IRON-SULFUR PROTEIN 3"/>
    <property type="match status" value="1"/>
</dbReference>
<dbReference type="Pfam" id="PF00329">
    <property type="entry name" value="Complex1_30kDa"/>
    <property type="match status" value="1"/>
</dbReference>
<dbReference type="SUPFAM" id="SSF143243">
    <property type="entry name" value="Nqo5-like"/>
    <property type="match status" value="1"/>
</dbReference>
<dbReference type="PROSITE" id="PS00542">
    <property type="entry name" value="COMPLEX1_30K"/>
    <property type="match status" value="1"/>
</dbReference>
<comment type="function">
    <text evidence="1">NDH-1 shuttles electrons from NADH, via FMN and iron-sulfur (Fe-S) centers, to quinones in the respiratory chain. The immediate electron acceptor for the enzyme in this species is believed to be ubiquinone. Couples the redox reaction to proton translocation (for every two electrons transferred, four hydrogen ions are translocated across the cytoplasmic membrane), and thus conserves the redox energy in a proton gradient.</text>
</comment>
<comment type="catalytic activity">
    <reaction evidence="1">
        <text>a quinone + NADH + 5 H(+)(in) = a quinol + NAD(+) + 4 H(+)(out)</text>
        <dbReference type="Rhea" id="RHEA:57888"/>
        <dbReference type="ChEBI" id="CHEBI:15378"/>
        <dbReference type="ChEBI" id="CHEBI:24646"/>
        <dbReference type="ChEBI" id="CHEBI:57540"/>
        <dbReference type="ChEBI" id="CHEBI:57945"/>
        <dbReference type="ChEBI" id="CHEBI:132124"/>
    </reaction>
</comment>
<comment type="subunit">
    <text evidence="1">NDH-1 is composed of 14 different subunits. Subunits NuoB, C, D, E, F, and G constitute the peripheral sector of the complex.</text>
</comment>
<comment type="subcellular location">
    <subcellularLocation>
        <location evidence="1">Cell inner membrane</location>
        <topology evidence="1">Peripheral membrane protein</topology>
        <orientation evidence="1">Cytoplasmic side</orientation>
    </subcellularLocation>
</comment>
<comment type="similarity">
    <text evidence="1">Belongs to the complex I 30 kDa subunit family.</text>
</comment>
<name>NUOC_CUPPJ</name>
<organism>
    <name type="scientific">Cupriavidus pinatubonensis (strain JMP 134 / LMG 1197)</name>
    <name type="common">Cupriavidus necator (strain JMP 134)</name>
    <dbReference type="NCBI Taxonomy" id="264198"/>
    <lineage>
        <taxon>Bacteria</taxon>
        <taxon>Pseudomonadati</taxon>
        <taxon>Pseudomonadota</taxon>
        <taxon>Betaproteobacteria</taxon>
        <taxon>Burkholderiales</taxon>
        <taxon>Burkholderiaceae</taxon>
        <taxon>Cupriavidus</taxon>
    </lineage>
</organism>
<keyword id="KW-0997">Cell inner membrane</keyword>
<keyword id="KW-1003">Cell membrane</keyword>
<keyword id="KW-0472">Membrane</keyword>
<keyword id="KW-0520">NAD</keyword>
<keyword id="KW-0874">Quinone</keyword>
<keyword id="KW-1278">Translocase</keyword>
<keyword id="KW-0813">Transport</keyword>
<keyword id="KW-0830">Ubiquinone</keyword>
<feature type="chain" id="PRO_0000358174" description="NADH-quinone oxidoreductase subunit C">
    <location>
        <begin position="1"/>
        <end position="199"/>
    </location>
</feature>
<proteinExistence type="inferred from homology"/>
<gene>
    <name evidence="1" type="primary">nuoC</name>
    <name type="ordered locus">Reut_A0963</name>
</gene>
<reference key="1">
    <citation type="journal article" date="2010" name="PLoS ONE">
        <title>The complete multipartite genome sequence of Cupriavidus necator JMP134, a versatile pollutant degrader.</title>
        <authorList>
            <person name="Lykidis A."/>
            <person name="Perez-Pantoja D."/>
            <person name="Ledger T."/>
            <person name="Mavromatis K."/>
            <person name="Anderson I.J."/>
            <person name="Ivanova N.N."/>
            <person name="Hooper S.D."/>
            <person name="Lapidus A."/>
            <person name="Lucas S."/>
            <person name="Gonzalez B."/>
            <person name="Kyrpides N.C."/>
        </authorList>
    </citation>
    <scope>NUCLEOTIDE SEQUENCE [LARGE SCALE GENOMIC DNA]</scope>
    <source>
        <strain>JMP134 / LMG 1197</strain>
    </source>
</reference>